<reference key="1">
    <citation type="journal article" date="1983" name="Nucleic Acids Res.">
        <title>The complete DNA sequence of minute virus of mice, an autonomous parvovirus.</title>
        <authorList>
            <person name="Astell C.R."/>
            <person name="Thomson M."/>
            <person name="Merchlinsky M."/>
            <person name="Ward D.C."/>
        </authorList>
    </citation>
    <scope>NUCLEOTIDE SEQUENCE [GENOMIC DNA]</scope>
</reference>
<reference key="2">
    <citation type="journal article" date="1986" name="J. Virol.">
        <title>Three splicing patterns are used to excise the small intron common to all minute virus of mice RNAs.</title>
        <authorList>
            <person name="Morgan W.R."/>
            <person name="Ward D.C."/>
        </authorList>
    </citation>
    <scope>ALTERNATIVE SPLICING</scope>
</reference>
<reference key="3">
    <citation type="journal article" date="2005" name="Proc. Natl. Acad. Sci. U.S.A.">
        <title>Parvoviral virions deploy a capsid-tethered lipolytic enzyme to breach the endosomal membrane during cell entry.</title>
        <authorList>
            <person name="Farr G.A."/>
            <person name="Zhang L.G."/>
            <person name="Tattersall P."/>
        </authorList>
    </citation>
    <scope>FUNCTION OF VP1</scope>
    <scope>PHOSPHOLIPASE A2-LIKE REGION</scope>
    <scope>NUCLEAR LOCALIZATION SIGNALS</scope>
</reference>
<protein>
    <recommendedName>
        <fullName>Capsid protein VP1</fullName>
    </recommendedName>
    <alternativeName>
        <fullName>Coat protein VP1</fullName>
    </alternativeName>
</protein>
<organismHost>
    <name type="scientific">Mus musculus</name>
    <name type="common">Mouse</name>
    <dbReference type="NCBI Taxonomy" id="10090"/>
</organismHost>
<sequence>MAPPAKRAKRGWVPPGYKYLGPGNSLDQGEPTNPSDAAAKEHDEAYDQYIKSGKNPYLYFSAADQRFIDQTKDAKDWGGKVGHYFFRTKRAFAPKLATDSEPGTSGVSRAGKRTRPPAYIFINQARAKKKLTSSAAQQSSQTMSDGTSQPDSGNAVHSAARVERAADGPGGSGGGGSGGGGVGVSTGSYDNQTHYRFLGDGWVEITALATRLVHLNMPKSENYCRIRVHNTTDTSVKGNMAKDDAHEQIWTPWSLVDANAWGVWLQPSDWQYICNTMSQLNLVSLDQEIFNVVLKTVTEQDLGGQAIKIYNNDLTACMMVAVDSNNILPYTPAANSMETLGFYPWKPTIASPYRYYFCVDRDLSVTYENQEGTVEHNVMGTPKGMNSQFFTIENTQQITLLRTGDEFATGTYYFDTNSVKLTHTWQTNRQLGQPPLLSTFPEADTDAGTLTAQGSRHGTTQMGVNWVSEAIRTRPAQVGFCQPHNDFEASRAGPFAAPKVPADITQGVDKEANGSVRYSYGKQHGENWASHGPAPERYTWDETSFGSGRDTKDGFIQSAPLVVPPPLNGILTNANPIGTKNDIHFSNVFNSYGPLTAFSHPSPVYPQGQIWDKELDLEHKPRLHITAPFVCKNNAPGQMLVRLGPNLTDQYDPNGATLSRIVTYGTFFWKGKLTMRAKLRANTTWNPVYQVSAEDNGNSYMSVTKWLPTATGNMQSVPLITRPVARNTY</sequence>
<keyword id="KW-0002">3D-structure</keyword>
<keyword id="KW-0025">Alternative splicing</keyword>
<keyword id="KW-0167">Capsid protein</keyword>
<keyword id="KW-1165">Clathrin-mediated endocytosis of virus by host</keyword>
<keyword id="KW-1176">Cytoplasmic inwards viral transport</keyword>
<keyword id="KW-1048">Host nucleus</keyword>
<keyword id="KW-0945">Host-virus interaction</keyword>
<keyword id="KW-0460">Magnesium</keyword>
<keyword id="KW-0479">Metal-binding</keyword>
<keyword id="KW-1177">Microtubular inwards viral transport</keyword>
<keyword id="KW-1185">Reference proteome</keyword>
<keyword id="KW-1140">T=1 icosahedral capsid protein</keyword>
<keyword id="KW-1161">Viral attachment to host cell</keyword>
<keyword id="KW-1162">Viral penetration into host cytoplasm</keyword>
<keyword id="KW-1163">Viral penetration into host nucleus</keyword>
<keyword id="KW-1173">Viral penetration via permeabilization of host membrane</keyword>
<keyword id="KW-0946">Virion</keyword>
<keyword id="KW-1164">Virus endocytosis by host</keyword>
<keyword id="KW-1160">Virus entry into host cell</keyword>
<organism>
    <name type="scientific">Murine minute virus (strain MVM prototype)</name>
    <name type="common">MVM</name>
    <name type="synonym">Murine minute virus (strain MVM(p))</name>
    <dbReference type="NCBI Taxonomy" id="648235"/>
    <lineage>
        <taxon>Viruses</taxon>
        <taxon>Monodnaviria</taxon>
        <taxon>Shotokuvirae</taxon>
        <taxon>Cossaviricota</taxon>
        <taxon>Quintoviricetes</taxon>
        <taxon>Piccovirales</taxon>
        <taxon>Parvoviridae</taxon>
        <taxon>Parvovirinae</taxon>
        <taxon>Protoparvovirus</taxon>
        <taxon>Protoparvovirus rodent1</taxon>
    </lineage>
</organism>
<evidence type="ECO:0000250" key="1"/>
<evidence type="ECO:0000255" key="2"/>
<evidence type="ECO:0000256" key="3">
    <source>
        <dbReference type="SAM" id="MobiDB-lite"/>
    </source>
</evidence>
<evidence type="ECO:0000269" key="4">
    <source>
    </source>
</evidence>
<evidence type="ECO:0000305" key="5"/>
<accession>P03137</accession>
<accession>Q84366</accession>
<proteinExistence type="evidence at protein level"/>
<feature type="chain" id="PRO_0000039419" description="Capsid protein VP1">
    <location>
        <begin position="1"/>
        <end position="729"/>
    </location>
</feature>
<feature type="region of interest" description="Disordered" evidence="3">
    <location>
        <begin position="1"/>
        <end position="38"/>
    </location>
</feature>
<feature type="region of interest" description="Phospholipase A2-like">
    <location>
        <begin position="19"/>
        <end position="64"/>
    </location>
</feature>
<feature type="region of interest" description="Disordered" evidence="3">
    <location>
        <begin position="96"/>
        <end position="115"/>
    </location>
</feature>
<feature type="region of interest" description="Disordered" evidence="3">
    <location>
        <begin position="130"/>
        <end position="185"/>
    </location>
</feature>
<feature type="short sequence motif" description="Nuclear localization signal" evidence="2">
    <location>
        <begin position="4"/>
        <end position="13"/>
    </location>
</feature>
<feature type="compositionally biased region" description="Basic residues" evidence="3">
    <location>
        <begin position="1"/>
        <end position="10"/>
    </location>
</feature>
<feature type="compositionally biased region" description="Polar residues" evidence="3">
    <location>
        <begin position="25"/>
        <end position="35"/>
    </location>
</feature>
<feature type="compositionally biased region" description="Low complexity" evidence="3">
    <location>
        <begin position="132"/>
        <end position="142"/>
    </location>
</feature>
<feature type="compositionally biased region" description="Polar residues" evidence="3">
    <location>
        <begin position="143"/>
        <end position="152"/>
    </location>
</feature>
<feature type="compositionally biased region" description="Gly residues" evidence="3">
    <location>
        <begin position="168"/>
        <end position="184"/>
    </location>
</feature>
<feature type="binding site" evidence="1">
    <location>
        <position position="325"/>
    </location>
    <ligand>
        <name>Mg(2+)</name>
        <dbReference type="ChEBI" id="CHEBI:18420"/>
        <label>1</label>
    </ligand>
</feature>
<feature type="splice variant" id="VSP_041135" description="In isoform VP2." evidence="5">
    <location>
        <begin position="1"/>
        <end position="142"/>
    </location>
</feature>
<feature type="sequence conflict" description="In Ref. 1; CAA24310." evidence="5" ref="1">
    <original>MNS</original>
    <variation>IP</variation>
    <location>
        <begin position="385"/>
        <end position="387"/>
    </location>
</feature>
<comment type="function">
    <text evidence="4">Capsid protein self-assembles to form an icosahedral capsid with a T=1 symmetry, about 22 nm in diameter, and consisting of 60 copies of two size variants of the capsid proteins, VP1 and VP2, which differ by the presence of an N-terminal extension in the minor protein VP1. The capsid encapsulates the genomic ssDNA. Capsid proteins are responsible for the attachment to host cell receptors. This attachment induces virion internalization predominantly through clathrin-dependent endocytosis. Binding to the host receptors also induces capsid rearrangements leading to surface exposure of VP1 N-terminus, specifically its phospholipase A2-like region and putative nuclear localization signal(s). VP1 N-terminus might serve as a lipolytic enzyme to breach the endosomal membrane during entry into host cell and might contribute to virus transport to the nucleus.</text>
</comment>
<comment type="subcellular location">
    <subcellularLocation>
        <location evidence="1">Virion</location>
    </subcellularLocation>
    <subcellularLocation>
        <location evidence="5">Host nucleus</location>
    </subcellularLocation>
</comment>
<comment type="alternative products">
    <event type="alternative splicing"/>
    <isoform>
        <id>P03137-1</id>
        <name>VP1</name>
        <sequence type="displayed"/>
    </isoform>
    <isoform>
        <id>P03137-2</id>
        <name>VP2</name>
        <sequence type="described" ref="VSP_041135"/>
    </isoform>
</comment>
<comment type="domain">
    <text>The N-terminus of VP1 is sequestered within the mature capsid. It contains a phospholipase A2-like region and putative nuclear localization signals.</text>
</comment>
<comment type="miscellaneous">
    <text>The capsids of autonomous parvoviruses expose a proportion of VP2 N-terminus and part of that sequence can be cleaved of to form VP3.</text>
</comment>
<comment type="miscellaneous">
    <molecule>Isoform VP1</molecule>
    <text>Minor splicing isoform.</text>
</comment>
<comment type="miscellaneous">
    <molecule>Isoform VP2</molecule>
    <text evidence="5">Major splicing isoform (approximately 70% of the molecules), produced by deletion of the initiating AUG for VP1 and downstream translation of VP2.</text>
</comment>
<comment type="similarity">
    <text evidence="5">Belongs to the parvoviridae capsid protein family.</text>
</comment>
<dbReference type="EMBL" id="V01115">
    <property type="protein sequence ID" value="CAA24310.1"/>
    <property type="status" value="ALT_SEQ"/>
    <property type="molecule type" value="Genomic_DNA"/>
</dbReference>
<dbReference type="EMBL" id="J02275">
    <property type="protein sequence ID" value="AAA67111.1"/>
    <property type="molecule type" value="Genomic_DNA"/>
</dbReference>
<dbReference type="PIR" id="A03700">
    <property type="entry name" value="VCPV2M"/>
</dbReference>
<dbReference type="RefSeq" id="NP_041244.1">
    <property type="nucleotide sequence ID" value="NC_001510.1"/>
</dbReference>
<dbReference type="RefSeq" id="NP_041245.1">
    <property type="nucleotide sequence ID" value="NC_001510.1"/>
</dbReference>
<dbReference type="PDB" id="4ZPY">
    <property type="method" value="X-ray"/>
    <property type="resolution" value="3.80 A"/>
    <property type="chains" value="A=181-729"/>
</dbReference>
<dbReference type="PDB" id="7Z5D">
    <property type="method" value="EM"/>
    <property type="resolution" value="3.42 A"/>
    <property type="chains" value="A=143-729"/>
</dbReference>
<dbReference type="PDB" id="7Z5E">
    <property type="method" value="EM"/>
    <property type="resolution" value="3.32 A"/>
    <property type="chains" value="A=143-729"/>
</dbReference>
<dbReference type="PDB" id="7Z5F">
    <property type="method" value="EM"/>
    <property type="resolution" value="3.22 A"/>
    <property type="chains" value="A=143-729"/>
</dbReference>
<dbReference type="PDBsum" id="4ZPY"/>
<dbReference type="PDBsum" id="7Z5D"/>
<dbReference type="PDBsum" id="7Z5E"/>
<dbReference type="PDBsum" id="7Z5F"/>
<dbReference type="EMDB" id="EMD-14519"/>
<dbReference type="EMDB" id="EMD-14520"/>
<dbReference type="EMDB" id="EMD-14521"/>
<dbReference type="SMR" id="P03137"/>
<dbReference type="GeneID" id="1489591"/>
<dbReference type="GeneID" id="1489592"/>
<dbReference type="KEGG" id="vg:1489591"/>
<dbReference type="KEGG" id="vg:1489592"/>
<dbReference type="Proteomes" id="UP000007019">
    <property type="component" value="Segment"/>
</dbReference>
<dbReference type="GO" id="GO:0043657">
    <property type="term" value="C:host cell"/>
    <property type="evidence" value="ECO:0007669"/>
    <property type="project" value="GOC"/>
</dbReference>
<dbReference type="GO" id="GO:0042025">
    <property type="term" value="C:host cell nucleus"/>
    <property type="evidence" value="ECO:0007669"/>
    <property type="project" value="UniProtKB-SubCell"/>
</dbReference>
<dbReference type="GO" id="GO:0039615">
    <property type="term" value="C:T=1 icosahedral viral capsid"/>
    <property type="evidence" value="ECO:0007669"/>
    <property type="project" value="UniProtKB-KW"/>
</dbReference>
<dbReference type="GO" id="GO:0046872">
    <property type="term" value="F:metal ion binding"/>
    <property type="evidence" value="ECO:0007669"/>
    <property type="project" value="UniProtKB-KW"/>
</dbReference>
<dbReference type="GO" id="GO:0005198">
    <property type="term" value="F:structural molecule activity"/>
    <property type="evidence" value="ECO:0007669"/>
    <property type="project" value="InterPro"/>
</dbReference>
<dbReference type="GO" id="GO:0075512">
    <property type="term" value="P:clathrin-dependent endocytosis of virus by host cell"/>
    <property type="evidence" value="ECO:0007669"/>
    <property type="project" value="UniProtKB-KW"/>
</dbReference>
<dbReference type="GO" id="GO:0075521">
    <property type="term" value="P:microtubule-dependent intracellular transport of viral material towards nucleus"/>
    <property type="evidence" value="ECO:0007669"/>
    <property type="project" value="UniProtKB-KW"/>
</dbReference>
<dbReference type="GO" id="GO:0140267">
    <property type="term" value="P:symbiont entry into host cell via permeabilization of host membrane"/>
    <property type="evidence" value="ECO:0007669"/>
    <property type="project" value="UniProtKB-KW"/>
</dbReference>
<dbReference type="GO" id="GO:0075732">
    <property type="term" value="P:viral penetration into host nucleus"/>
    <property type="evidence" value="ECO:0007669"/>
    <property type="project" value="UniProtKB-KW"/>
</dbReference>
<dbReference type="GO" id="GO:0019062">
    <property type="term" value="P:virion attachment to host cell"/>
    <property type="evidence" value="ECO:0007669"/>
    <property type="project" value="UniProtKB-KW"/>
</dbReference>
<dbReference type="Gene3D" id="2.170.30.10">
    <property type="entry name" value="Parvovirus coat protein VP1/VP2"/>
    <property type="match status" value="1"/>
</dbReference>
<dbReference type="InterPro" id="IPR016184">
    <property type="entry name" value="Capsid/spike_ssDNA_virus"/>
</dbReference>
<dbReference type="InterPro" id="IPR001403">
    <property type="entry name" value="Parvovirus_coat"/>
</dbReference>
<dbReference type="InterPro" id="IPR013607">
    <property type="entry name" value="Phospholipase_A2-like"/>
</dbReference>
<dbReference type="InterPro" id="IPR036952">
    <property type="entry name" value="VP1/VP2"/>
</dbReference>
<dbReference type="Pfam" id="PF00740">
    <property type="entry name" value="Parvo_coat"/>
    <property type="match status" value="1"/>
</dbReference>
<dbReference type="Pfam" id="PF08398">
    <property type="entry name" value="Phospholip_A2_4"/>
    <property type="match status" value="1"/>
</dbReference>
<dbReference type="SUPFAM" id="SSF88645">
    <property type="entry name" value="ssDNA viruses"/>
    <property type="match status" value="1"/>
</dbReference>
<name>CAPSD_MUMIP</name>